<gene>
    <name type="primary">cenB</name>
</gene>
<organism>
    <name type="scientific">Cellulomonas fimi</name>
    <dbReference type="NCBI Taxonomy" id="1708"/>
    <lineage>
        <taxon>Bacteria</taxon>
        <taxon>Bacillati</taxon>
        <taxon>Actinomycetota</taxon>
        <taxon>Actinomycetes</taxon>
        <taxon>Micrococcales</taxon>
        <taxon>Cellulomonadaceae</taxon>
        <taxon>Cellulomonas</taxon>
    </lineage>
</organism>
<feature type="signal peptide" evidence="2">
    <location>
        <begin position="1"/>
        <end position="33"/>
    </location>
</feature>
<feature type="chain" id="PRO_0000007945" description="Endoglucanase B">
    <location>
        <begin position="34"/>
        <end position="1045"/>
    </location>
</feature>
<feature type="domain" description="CBM3" evidence="4">
    <location>
        <begin position="493"/>
        <end position="642"/>
    </location>
</feature>
<feature type="domain" description="Fibronectin type-III 1" evidence="3">
    <location>
        <begin position="653"/>
        <end position="743"/>
    </location>
</feature>
<feature type="domain" description="Fibronectin type-III 2" evidence="3">
    <location>
        <begin position="751"/>
        <end position="840"/>
    </location>
</feature>
<feature type="domain" description="Fibronectin type-III 3" evidence="3">
    <location>
        <begin position="849"/>
        <end position="940"/>
    </location>
</feature>
<feature type="domain" description="CBM2" evidence="5">
    <location>
        <begin position="939"/>
        <end position="1045"/>
    </location>
</feature>
<feature type="region of interest" description="Catalytic">
    <location>
        <begin position="34"/>
        <end position="492"/>
    </location>
</feature>
<feature type="region of interest" description="Linker ('hinge') (Pro-Thr box)">
    <location>
        <begin position="644"/>
        <end position="650"/>
    </location>
</feature>
<feature type="region of interest" description="Linker ('hinge') (Pro-Thr box)">
    <location>
        <begin position="734"/>
        <end position="748"/>
    </location>
</feature>
<feature type="region of interest" description="Linker ('hinge') (Pro-Thr box)">
    <location>
        <begin position="831"/>
        <end position="846"/>
    </location>
</feature>
<feature type="region of interest" description="Linker ('hinge') (Pro-Thr box)">
    <location>
        <begin position="931"/>
        <end position="944"/>
    </location>
</feature>
<feature type="active site" description="Nucleophile" evidence="8">
    <location>
        <position position="91"/>
    </location>
</feature>
<feature type="active site" evidence="6">
    <location>
        <position position="410"/>
    </location>
</feature>
<feature type="active site" evidence="7">
    <location>
        <position position="449"/>
    </location>
</feature>
<feature type="active site" evidence="7">
    <location>
        <position position="458"/>
    </location>
</feature>
<feature type="disulfide bond" evidence="1">
    <location>
        <begin position="946"/>
        <end position="1044"/>
    </location>
</feature>
<evidence type="ECO:0000250" key="1"/>
<evidence type="ECO:0000255" key="2"/>
<evidence type="ECO:0000255" key="3">
    <source>
        <dbReference type="PROSITE-ProRule" id="PRU00316"/>
    </source>
</evidence>
<evidence type="ECO:0000255" key="4">
    <source>
        <dbReference type="PROSITE-ProRule" id="PRU00513"/>
    </source>
</evidence>
<evidence type="ECO:0000255" key="5">
    <source>
        <dbReference type="PROSITE-ProRule" id="PRU01135"/>
    </source>
</evidence>
<evidence type="ECO:0000255" key="6">
    <source>
        <dbReference type="PROSITE-ProRule" id="PRU10059"/>
    </source>
</evidence>
<evidence type="ECO:0000255" key="7">
    <source>
        <dbReference type="PROSITE-ProRule" id="PRU10060"/>
    </source>
</evidence>
<evidence type="ECO:0000255" key="8">
    <source>
        <dbReference type="PROSITE-ProRule" id="PRU10140"/>
    </source>
</evidence>
<evidence type="ECO:0000269" key="9">
    <source>
    </source>
</evidence>
<evidence type="ECO:0000305" key="10"/>
<accession>P26225</accession>
<proteinExistence type="inferred from homology"/>
<comment type="function">
    <text>The biological conversion of cellulose to glucose generally requires three types of hydrolytic enzymes: (1) Endoglucanases which cut internal beta-1,4-glucosidic bonds; (2) Exocellobiohydrolases that cut the disaccharide cellobiose from the non-reducing end of the cellulose polymer chain; (3) Beta-1,4-glucosidases which hydrolyze the cellobiose and other short cello-oligosaccharides to glucose.</text>
</comment>
<comment type="catalytic activity">
    <reaction>
        <text>Endohydrolysis of (1-&gt;4)-beta-D-glucosidic linkages in cellulose, lichenin and cereal beta-D-glucans.</text>
        <dbReference type="EC" id="3.2.1.4"/>
    </reaction>
</comment>
<comment type="domain">
    <text evidence="9">The linker region (also termed 'hinge') may be a potential site for proteolysis.</text>
</comment>
<comment type="similarity">
    <text evidence="8 10">Belongs to the glycosyl hydrolase 9 (cellulase E) family.</text>
</comment>
<name>GUNB_CELFI</name>
<keyword id="KW-0119">Carbohydrate metabolism</keyword>
<keyword id="KW-0136">Cellulose degradation</keyword>
<keyword id="KW-1015">Disulfide bond</keyword>
<keyword id="KW-0326">Glycosidase</keyword>
<keyword id="KW-0378">Hydrolase</keyword>
<keyword id="KW-0624">Polysaccharide degradation</keyword>
<keyword id="KW-0677">Repeat</keyword>
<keyword id="KW-0732">Signal</keyword>
<protein>
    <recommendedName>
        <fullName>Endoglucanase B</fullName>
        <ecNumber>3.2.1.4</ecNumber>
    </recommendedName>
    <alternativeName>
        <fullName>Cellulase B</fullName>
    </alternativeName>
    <alternativeName>
        <fullName>Endo-1,4-beta-glucanase B</fullName>
    </alternativeName>
</protein>
<dbReference type="EC" id="3.2.1.4"/>
<dbReference type="EMBL" id="M64644">
    <property type="protein sequence ID" value="AAA23086.1"/>
    <property type="molecule type" value="Genomic_DNA"/>
</dbReference>
<dbReference type="PIR" id="A39199">
    <property type="entry name" value="A39199"/>
</dbReference>
<dbReference type="RefSeq" id="WP_013769201.1">
    <property type="nucleotide sequence ID" value="NZ_LR134387.1"/>
</dbReference>
<dbReference type="SMR" id="P26225"/>
<dbReference type="CAZy" id="CBM2">
    <property type="family name" value="Carbohydrate-Binding Module Family 2"/>
</dbReference>
<dbReference type="CAZy" id="CBM3">
    <property type="family name" value="Carbohydrate-Binding Module Family 3"/>
</dbReference>
<dbReference type="CAZy" id="GH9">
    <property type="family name" value="Glycoside Hydrolase Family 9"/>
</dbReference>
<dbReference type="OMA" id="RWLDYWT"/>
<dbReference type="OrthoDB" id="9758662at2"/>
<dbReference type="GO" id="GO:0008810">
    <property type="term" value="F:cellulase activity"/>
    <property type="evidence" value="ECO:0007669"/>
    <property type="project" value="UniProtKB-EC"/>
</dbReference>
<dbReference type="GO" id="GO:0030248">
    <property type="term" value="F:cellulose binding"/>
    <property type="evidence" value="ECO:0007669"/>
    <property type="project" value="InterPro"/>
</dbReference>
<dbReference type="GO" id="GO:0030245">
    <property type="term" value="P:cellulose catabolic process"/>
    <property type="evidence" value="ECO:0007669"/>
    <property type="project" value="UniProtKB-KW"/>
</dbReference>
<dbReference type="CDD" id="cd00063">
    <property type="entry name" value="FN3"/>
    <property type="match status" value="3"/>
</dbReference>
<dbReference type="FunFam" id="1.50.10.10:FF:000020">
    <property type="entry name" value="Endoglucanase"/>
    <property type="match status" value="1"/>
</dbReference>
<dbReference type="Gene3D" id="1.50.10.10">
    <property type="match status" value="1"/>
</dbReference>
<dbReference type="Gene3D" id="2.60.40.290">
    <property type="match status" value="1"/>
</dbReference>
<dbReference type="Gene3D" id="2.60.40.710">
    <property type="entry name" value="Endoglucanase-like"/>
    <property type="match status" value="1"/>
</dbReference>
<dbReference type="Gene3D" id="2.60.40.10">
    <property type="entry name" value="Immunoglobulins"/>
    <property type="match status" value="3"/>
</dbReference>
<dbReference type="InterPro" id="IPR008928">
    <property type="entry name" value="6-hairpin_glycosidase_sf"/>
</dbReference>
<dbReference type="InterPro" id="IPR012341">
    <property type="entry name" value="6hp_glycosidase-like_sf"/>
</dbReference>
<dbReference type="InterPro" id="IPR001919">
    <property type="entry name" value="CBD2"/>
</dbReference>
<dbReference type="InterPro" id="IPR008965">
    <property type="entry name" value="CBM2/CBM3_carb-bd_dom_sf"/>
</dbReference>
<dbReference type="InterPro" id="IPR012291">
    <property type="entry name" value="CBM2_carb-bd_dom_sf"/>
</dbReference>
<dbReference type="InterPro" id="IPR018366">
    <property type="entry name" value="CBM2_CS"/>
</dbReference>
<dbReference type="InterPro" id="IPR001956">
    <property type="entry name" value="CBM3"/>
</dbReference>
<dbReference type="InterPro" id="IPR036966">
    <property type="entry name" value="CBM3_sf"/>
</dbReference>
<dbReference type="InterPro" id="IPR003961">
    <property type="entry name" value="FN3_dom"/>
</dbReference>
<dbReference type="InterPro" id="IPR036116">
    <property type="entry name" value="FN3_sf"/>
</dbReference>
<dbReference type="InterPro" id="IPR001701">
    <property type="entry name" value="Glyco_hydro_9"/>
</dbReference>
<dbReference type="InterPro" id="IPR033126">
    <property type="entry name" value="Glyco_hydro_9_Asp/Glu_AS"/>
</dbReference>
<dbReference type="InterPro" id="IPR018221">
    <property type="entry name" value="Glyco_hydro_9_His_AS"/>
</dbReference>
<dbReference type="InterPro" id="IPR013783">
    <property type="entry name" value="Ig-like_fold"/>
</dbReference>
<dbReference type="PANTHER" id="PTHR22298">
    <property type="entry name" value="ENDO-1,4-BETA-GLUCANASE"/>
    <property type="match status" value="1"/>
</dbReference>
<dbReference type="Pfam" id="PF00553">
    <property type="entry name" value="CBM_2"/>
    <property type="match status" value="1"/>
</dbReference>
<dbReference type="Pfam" id="PF00942">
    <property type="entry name" value="CBM_3"/>
    <property type="match status" value="1"/>
</dbReference>
<dbReference type="Pfam" id="PF00041">
    <property type="entry name" value="fn3"/>
    <property type="match status" value="3"/>
</dbReference>
<dbReference type="Pfam" id="PF00759">
    <property type="entry name" value="Glyco_hydro_9"/>
    <property type="match status" value="1"/>
</dbReference>
<dbReference type="SMART" id="SM00637">
    <property type="entry name" value="CBD_II"/>
    <property type="match status" value="1"/>
</dbReference>
<dbReference type="SMART" id="SM01067">
    <property type="entry name" value="CBM_3"/>
    <property type="match status" value="1"/>
</dbReference>
<dbReference type="SMART" id="SM00060">
    <property type="entry name" value="FN3"/>
    <property type="match status" value="3"/>
</dbReference>
<dbReference type="SUPFAM" id="SSF49384">
    <property type="entry name" value="Carbohydrate-binding domain"/>
    <property type="match status" value="2"/>
</dbReference>
<dbReference type="SUPFAM" id="SSF49265">
    <property type="entry name" value="Fibronectin type III"/>
    <property type="match status" value="2"/>
</dbReference>
<dbReference type="SUPFAM" id="SSF48208">
    <property type="entry name" value="Six-hairpin glycosidases"/>
    <property type="match status" value="1"/>
</dbReference>
<dbReference type="PROSITE" id="PS51173">
    <property type="entry name" value="CBM2"/>
    <property type="match status" value="1"/>
</dbReference>
<dbReference type="PROSITE" id="PS00561">
    <property type="entry name" value="CBM2_A"/>
    <property type="match status" value="1"/>
</dbReference>
<dbReference type="PROSITE" id="PS51172">
    <property type="entry name" value="CBM3"/>
    <property type="match status" value="1"/>
</dbReference>
<dbReference type="PROSITE" id="PS50853">
    <property type="entry name" value="FN3"/>
    <property type="match status" value="3"/>
</dbReference>
<dbReference type="PROSITE" id="PS60032">
    <property type="entry name" value="GH9_1"/>
    <property type="match status" value="1"/>
</dbReference>
<dbReference type="PROSITE" id="PS00592">
    <property type="entry name" value="GH9_2"/>
    <property type="match status" value="1"/>
</dbReference>
<dbReference type="PROSITE" id="PS00698">
    <property type="entry name" value="GH9_3"/>
    <property type="match status" value="1"/>
</dbReference>
<reference key="1">
    <citation type="journal article" date="1991" name="J. Bacteriol.">
        <title>Unusual sequence organization in CenB, an inverting endoglucanase from Cellulomonas fimi.</title>
        <authorList>
            <person name="Meinke A."/>
            <person name="Braun C."/>
            <person name="Gilkes N.R."/>
            <person name="Kilburn D.G."/>
            <person name="Miller R.C. Jr."/>
            <person name="Warren R.A.J."/>
        </authorList>
    </citation>
    <scope>NUCLEOTIDE SEQUENCE [GENOMIC DNA]</scope>
</reference>
<reference key="2">
    <citation type="journal article" date="1991" name="J. Bacteriol.">
        <title>Multiple domains in endoglucanase B (CenB) from Cellulomonas fimi: functions and relatedness to domains in other polypeptides.</title>
        <authorList>
            <person name="Meinke A."/>
            <person name="Gilkes N.R."/>
            <person name="Kilburn D.G."/>
            <person name="Miller R.C. Jr."/>
            <person name="Warren R.A.J."/>
        </authorList>
    </citation>
    <scope>DOMAINS</scope>
</reference>
<sequence length="1045" mass="108991">MLRQVPRTLVAGGSALAVAVGVLVAPLATGAAAAPTYNYAEALQKSMFFYQAQRSGDLPADFPVSWRGDSGLTDGADVGKDLTGGWYDAGDHVKFGFPMAFSATMLAWGAIESPTGYSKAGSLDELKDNLRFVSDYFVKAHTAPNELYVQVGDGEADHKWWGPAEVMTMARPSHKISASCPGSDVAAETAAALASSAIVLKGDDPAYAATLVSHAKQLYTFADTYRGAYSDCVTAASAYYKSWSGYQDELVWGAYWLYKATGDATYLAKAEAEYDKLGTENQSTTRSYKWTIAWDNKQFGTYALLAMETGKQKYVDDANRWLDYWTVGVNGQKVPYSPGGQAVLDSWGALRYAANTSFVALVYSDWMTDATRKARYHDFGVRQINYALGDNPRSSSYVVGFGANPPTAPHHRTAHGSWLDSITTPAQSRHVLYGALVGGPGSPNDAYTDSRQDYVANEVATDYNAGFTSALARLVEEYGGTPLASFPTPEQPDGDQLFVEAMLNQPPSGTFTEVKAMIRNQSAFPARSLKNAKVRYWFTTDGFAASDVTLSANYSECGAQSGKGVSAGGTLGYVELSCVGQDIHPGGQSQHRREIQFRLTGPAGWNPANDPSYTGLTQTALAKASAITLYDGSTLVWGKEPTGTTTDTTPPTTPGTPVATGVTTVGASLSWAASTDAGSGVAGYELYRVQGTTQTLVGTTTAAAYILRDLTPGTAYSYVVKAKDVAGNVSAASAAVTFTTDTTGETEPPTTPGTPVASAVTSTGATLAWAPSTGDPAVSGYDVLRVQGTTTTVVAQTTVPTVTLSGLTPSTAYTYAVRAKNVAGDVSALSAPVTFTTAAPPVDTVAPTVPGTPVASNVATTGATLTWTASTDSGGSGLAGYEVLRVSGTTQTLVASPTTATVALAGLTPATAYSYVVRAKDGAGNVSAVSSPVTFTTLPVTSTPSCTVVYSTNSWNVGFTGSVKITNTGTTPLTWTLGFAFPSGQQVTQGWSATWSQTGTTVTATGLSWNATLQPGQSTDIGFNGSHPGTNTNPASFTVNGEVCG</sequence>